<keyword id="KW-0067">ATP-binding</keyword>
<keyword id="KW-0131">Cell cycle</keyword>
<keyword id="KW-0132">Cell division</keyword>
<keyword id="KW-0133">Cell shape</keyword>
<keyword id="KW-0961">Cell wall biogenesis/degradation</keyword>
<keyword id="KW-0963">Cytoplasm</keyword>
<keyword id="KW-0436">Ligase</keyword>
<keyword id="KW-0547">Nucleotide-binding</keyword>
<keyword id="KW-0573">Peptidoglycan synthesis</keyword>
<keyword id="KW-1185">Reference proteome</keyword>
<comment type="function">
    <text evidence="1">Cell wall formation. Catalyzes the addition of glutamate to the nucleotide precursor UDP-N-acetylmuramoyl-L-alanine (UMA).</text>
</comment>
<comment type="catalytic activity">
    <reaction evidence="1">
        <text>UDP-N-acetyl-alpha-D-muramoyl-L-alanine + D-glutamate + ATP = UDP-N-acetyl-alpha-D-muramoyl-L-alanyl-D-glutamate + ADP + phosphate + H(+)</text>
        <dbReference type="Rhea" id="RHEA:16429"/>
        <dbReference type="ChEBI" id="CHEBI:15378"/>
        <dbReference type="ChEBI" id="CHEBI:29986"/>
        <dbReference type="ChEBI" id="CHEBI:30616"/>
        <dbReference type="ChEBI" id="CHEBI:43474"/>
        <dbReference type="ChEBI" id="CHEBI:83898"/>
        <dbReference type="ChEBI" id="CHEBI:83900"/>
        <dbReference type="ChEBI" id="CHEBI:456216"/>
        <dbReference type="EC" id="6.3.2.9"/>
    </reaction>
</comment>
<comment type="pathway">
    <text evidence="1">Cell wall biogenesis; peptidoglycan biosynthesis.</text>
</comment>
<comment type="subcellular location">
    <subcellularLocation>
        <location evidence="1">Cytoplasm</location>
    </subcellularLocation>
</comment>
<comment type="similarity">
    <text evidence="1">Belongs to the MurCDEF family.</text>
</comment>
<proteinExistence type="inferred from homology"/>
<dbReference type="EC" id="6.3.2.9" evidence="1"/>
<dbReference type="EMBL" id="BX571871">
    <property type="protein sequence ID" value="CAE16029.1"/>
    <property type="molecule type" value="Genomic_DNA"/>
</dbReference>
<dbReference type="RefSeq" id="WP_011147819.1">
    <property type="nucleotide sequence ID" value="NC_005126.1"/>
</dbReference>
<dbReference type="SMR" id="Q7N145"/>
<dbReference type="STRING" id="243265.plu3656"/>
<dbReference type="GeneID" id="48849899"/>
<dbReference type="KEGG" id="plu:plu3656"/>
<dbReference type="eggNOG" id="COG0771">
    <property type="taxonomic scope" value="Bacteria"/>
</dbReference>
<dbReference type="HOGENOM" id="CLU_032540_1_0_6"/>
<dbReference type="OrthoDB" id="9809796at2"/>
<dbReference type="UniPathway" id="UPA00219"/>
<dbReference type="Proteomes" id="UP000002514">
    <property type="component" value="Chromosome"/>
</dbReference>
<dbReference type="GO" id="GO:0005737">
    <property type="term" value="C:cytoplasm"/>
    <property type="evidence" value="ECO:0007669"/>
    <property type="project" value="UniProtKB-SubCell"/>
</dbReference>
<dbReference type="GO" id="GO:0005524">
    <property type="term" value="F:ATP binding"/>
    <property type="evidence" value="ECO:0007669"/>
    <property type="project" value="UniProtKB-UniRule"/>
</dbReference>
<dbReference type="GO" id="GO:0008764">
    <property type="term" value="F:UDP-N-acetylmuramoylalanine-D-glutamate ligase activity"/>
    <property type="evidence" value="ECO:0007669"/>
    <property type="project" value="UniProtKB-UniRule"/>
</dbReference>
<dbReference type="GO" id="GO:0051301">
    <property type="term" value="P:cell division"/>
    <property type="evidence" value="ECO:0007669"/>
    <property type="project" value="UniProtKB-KW"/>
</dbReference>
<dbReference type="GO" id="GO:0071555">
    <property type="term" value="P:cell wall organization"/>
    <property type="evidence" value="ECO:0007669"/>
    <property type="project" value="UniProtKB-KW"/>
</dbReference>
<dbReference type="GO" id="GO:0009252">
    <property type="term" value="P:peptidoglycan biosynthetic process"/>
    <property type="evidence" value="ECO:0007669"/>
    <property type="project" value="UniProtKB-UniRule"/>
</dbReference>
<dbReference type="GO" id="GO:0008360">
    <property type="term" value="P:regulation of cell shape"/>
    <property type="evidence" value="ECO:0007669"/>
    <property type="project" value="UniProtKB-KW"/>
</dbReference>
<dbReference type="Gene3D" id="3.90.190.20">
    <property type="entry name" value="Mur ligase, C-terminal domain"/>
    <property type="match status" value="1"/>
</dbReference>
<dbReference type="Gene3D" id="3.40.1190.10">
    <property type="entry name" value="Mur-like, catalytic domain"/>
    <property type="match status" value="1"/>
</dbReference>
<dbReference type="Gene3D" id="3.40.50.720">
    <property type="entry name" value="NAD(P)-binding Rossmann-like Domain"/>
    <property type="match status" value="1"/>
</dbReference>
<dbReference type="HAMAP" id="MF_00639">
    <property type="entry name" value="MurD"/>
    <property type="match status" value="1"/>
</dbReference>
<dbReference type="InterPro" id="IPR036565">
    <property type="entry name" value="Mur-like_cat_sf"/>
</dbReference>
<dbReference type="InterPro" id="IPR004101">
    <property type="entry name" value="Mur_ligase_C"/>
</dbReference>
<dbReference type="InterPro" id="IPR036615">
    <property type="entry name" value="Mur_ligase_C_dom_sf"/>
</dbReference>
<dbReference type="InterPro" id="IPR013221">
    <property type="entry name" value="Mur_ligase_cen"/>
</dbReference>
<dbReference type="InterPro" id="IPR005762">
    <property type="entry name" value="MurD"/>
</dbReference>
<dbReference type="NCBIfam" id="TIGR01087">
    <property type="entry name" value="murD"/>
    <property type="match status" value="1"/>
</dbReference>
<dbReference type="PANTHER" id="PTHR43692">
    <property type="entry name" value="UDP-N-ACETYLMURAMOYLALANINE--D-GLUTAMATE LIGASE"/>
    <property type="match status" value="1"/>
</dbReference>
<dbReference type="PANTHER" id="PTHR43692:SF1">
    <property type="entry name" value="UDP-N-ACETYLMURAMOYLALANINE--D-GLUTAMATE LIGASE"/>
    <property type="match status" value="1"/>
</dbReference>
<dbReference type="Pfam" id="PF02875">
    <property type="entry name" value="Mur_ligase_C"/>
    <property type="match status" value="1"/>
</dbReference>
<dbReference type="Pfam" id="PF08245">
    <property type="entry name" value="Mur_ligase_M"/>
    <property type="match status" value="1"/>
</dbReference>
<dbReference type="Pfam" id="PF21799">
    <property type="entry name" value="MurD-like_N"/>
    <property type="match status" value="1"/>
</dbReference>
<dbReference type="SUPFAM" id="SSF51984">
    <property type="entry name" value="MurCD N-terminal domain"/>
    <property type="match status" value="1"/>
</dbReference>
<dbReference type="SUPFAM" id="SSF53623">
    <property type="entry name" value="MurD-like peptide ligases, catalytic domain"/>
    <property type="match status" value="1"/>
</dbReference>
<dbReference type="SUPFAM" id="SSF53244">
    <property type="entry name" value="MurD-like peptide ligases, peptide-binding domain"/>
    <property type="match status" value="1"/>
</dbReference>
<name>MURD_PHOLL</name>
<evidence type="ECO:0000255" key="1">
    <source>
        <dbReference type="HAMAP-Rule" id="MF_00639"/>
    </source>
</evidence>
<gene>
    <name evidence="1" type="primary">murD</name>
    <name type="ordered locus">plu3656</name>
</gene>
<feature type="chain" id="PRO_0000109056" description="UDP-N-acetylmuramoylalanine--D-glutamate ligase">
    <location>
        <begin position="1"/>
        <end position="436"/>
    </location>
</feature>
<feature type="binding site" evidence="1">
    <location>
        <begin position="112"/>
        <end position="118"/>
    </location>
    <ligand>
        <name>ATP</name>
        <dbReference type="ChEBI" id="CHEBI:30616"/>
    </ligand>
</feature>
<accession>Q7N145</accession>
<reference key="1">
    <citation type="journal article" date="2003" name="Nat. Biotechnol.">
        <title>The genome sequence of the entomopathogenic bacterium Photorhabdus luminescens.</title>
        <authorList>
            <person name="Duchaud E."/>
            <person name="Rusniok C."/>
            <person name="Frangeul L."/>
            <person name="Buchrieser C."/>
            <person name="Givaudan A."/>
            <person name="Taourit S."/>
            <person name="Bocs S."/>
            <person name="Boursaux-Eude C."/>
            <person name="Chandler M."/>
            <person name="Charles J.-F."/>
            <person name="Dassa E."/>
            <person name="Derose R."/>
            <person name="Derzelle S."/>
            <person name="Freyssinet G."/>
            <person name="Gaudriault S."/>
            <person name="Medigue C."/>
            <person name="Lanois A."/>
            <person name="Powell K."/>
            <person name="Siguier P."/>
            <person name="Vincent R."/>
            <person name="Wingate V."/>
            <person name="Zouine M."/>
            <person name="Glaser P."/>
            <person name="Boemare N."/>
            <person name="Danchin A."/>
            <person name="Kunst F."/>
        </authorList>
    </citation>
    <scope>NUCLEOTIDE SEQUENCE [LARGE SCALE GENOMIC DNA]</scope>
    <source>
        <strain>DSM 15139 / CIP 105565 / TT01</strain>
    </source>
</reference>
<protein>
    <recommendedName>
        <fullName evidence="1">UDP-N-acetylmuramoylalanine--D-glutamate ligase</fullName>
        <ecNumber evidence="1">6.3.2.9</ecNumber>
    </recommendedName>
    <alternativeName>
        <fullName evidence="1">D-glutamic acid-adding enzyme</fullName>
    </alternativeName>
    <alternativeName>
        <fullName evidence="1">UDP-N-acetylmuramoyl-L-alanyl-D-glutamate synthetase</fullName>
    </alternativeName>
</protein>
<organism>
    <name type="scientific">Photorhabdus laumondii subsp. laumondii (strain DSM 15139 / CIP 105565 / TT01)</name>
    <name type="common">Photorhabdus luminescens subsp. laumondii</name>
    <dbReference type="NCBI Taxonomy" id="243265"/>
    <lineage>
        <taxon>Bacteria</taxon>
        <taxon>Pseudomonadati</taxon>
        <taxon>Pseudomonadota</taxon>
        <taxon>Gammaproteobacteria</taxon>
        <taxon>Enterobacterales</taxon>
        <taxon>Morganellaceae</taxon>
        <taxon>Photorhabdus</taxon>
    </lineage>
</organism>
<sequence length="436" mass="46818">MADYLGKKVVIIGLGLTGLSCVDFFMARGVIPRVMDTRTAPPGKDKLPDGVECHSGSLNADWLMDADLIVVSPGIALATAVLQAAANAGIEIVGDIELFCREATAPIVAITGSNGKSTVTSLVGEMAKAANWQVGVGGNIGLPALELLKKSCQLYVLELSSFQLETTYSLNATAAAVLNVTEDHMDRYPQGVSQYRAAKLRIYHQAKRCIVNAQDPLTLPEMGMDSRCVSFGVDCGDYQLDSENAFLKVHNQSLLATNEIKLTGRHNYANGLVALALADAVGIPREASLATLTVYPGLDHRFQLARLNKGVRWINDSKATNVGSTMAALDGLNLEGTLYLLLGGDGKSADFSPLKPFLCGNKVQLYCFGRDGKQLAQLRPEIATLTETMEQAIRDIAPRLVAGDMVLLSPACASLDQFRNFEQRGHEFTRLAEELG</sequence>